<proteinExistence type="evidence at protein level"/>
<sequence length="71" mass="7529">MAVEKTNSSSSLAEVIDRILDKGIVIDAWVRVSLVGIELLAIEARIVIASVETYLKYAEAVGLTQSAAVPA</sequence>
<name>GVPA_DOLFA</name>
<evidence type="ECO:0000255" key="1">
    <source>
        <dbReference type="HAMAP-Rule" id="MF_00576"/>
    </source>
</evidence>
<evidence type="ECO:0000269" key="2">
    <source>
    </source>
</evidence>
<evidence type="ECO:0000269" key="3">
    <source>
    </source>
</evidence>
<evidence type="ECO:0000269" key="4">
    <source>
    </source>
</evidence>
<evidence type="ECO:0000269" key="5">
    <source>
    </source>
</evidence>
<evidence type="ECO:0000269" key="6">
    <source>
    </source>
</evidence>
<evidence type="ECO:0000269" key="7">
    <source>
    </source>
</evidence>
<evidence type="ECO:0000269" key="8">
    <source>
    </source>
</evidence>
<evidence type="ECO:0000269" key="9">
    <source>
    </source>
</evidence>
<evidence type="ECO:0000269" key="10">
    <source>
    </source>
</evidence>
<evidence type="ECO:0000269" key="11">
    <source>
    </source>
</evidence>
<evidence type="ECO:0000269" key="12">
    <source>
    </source>
</evidence>
<evidence type="ECO:0000269" key="13">
    <source>
    </source>
</evidence>
<evidence type="ECO:0000269" key="14">
    <source>
    </source>
</evidence>
<evidence type="ECO:0000269" key="15">
    <source>
    </source>
</evidence>
<evidence type="ECO:0000269" key="16">
    <source ref="5"/>
</evidence>
<evidence type="ECO:0000269" key="17">
    <source ref="7"/>
</evidence>
<evidence type="ECO:0000303" key="18">
    <source>
    </source>
</evidence>
<evidence type="ECO:0000303" key="19">
    <source>
    </source>
</evidence>
<evidence type="ECO:0000305" key="20"/>
<evidence type="ECO:0000305" key="21">
    <source>
    </source>
</evidence>
<evidence type="ECO:0000305" key="22">
    <source>
    </source>
</evidence>
<evidence type="ECO:0000305" key="23">
    <source>
    </source>
</evidence>
<evidence type="ECO:0000305" key="24">
    <source>
    </source>
</evidence>
<accession>P10397</accession>
<accession>P80995</accession>
<organism>
    <name type="scientific">Dolichospermum flosaquae</name>
    <name type="common">Anabaena flos-aquae</name>
    <dbReference type="NCBI Taxonomy" id="1166"/>
    <lineage>
        <taxon>Bacteria</taxon>
        <taxon>Bacillati</taxon>
        <taxon>Cyanobacteriota</taxon>
        <taxon>Cyanophyceae</taxon>
        <taxon>Nostocales</taxon>
        <taxon>Aphanizomenonaceae</taxon>
        <taxon>Dolichospermum</taxon>
    </lineage>
</organism>
<reference key="1">
    <citation type="journal article" date="1992" name="J. Gen. Microbiol.">
        <title>The homologies of gas vesicle proteins.</title>
        <authorList>
            <person name="Griffiths A.E."/>
            <person name="Walsby A.E."/>
            <person name="Hayes P.K."/>
        </authorList>
    </citation>
    <scope>NUCLEOTIDE SEQUENCE [GENOMIC DNA]</scope>
    <scope>PROTEIN SEQUENCE OF 2-13</scope>
    <scope>FUNCTION</scope>
    <scope>SUBCELLULAR LOCATION</scope>
    <source>
        <strain>CCAP 1403/13f</strain>
    </source>
</reference>
<reference key="2">
    <citation type="journal article" date="1997" name="DNA Seq.">
        <title>Genes encoding proteins homologous to halobacterial Gvps N, J, K, F and L are located downstream of gvpC in the cyanobacterium Anabaena flos-aquae.</title>
        <authorList>
            <person name="Kinsman R."/>
            <person name="Hayes P.K."/>
        </authorList>
    </citation>
    <scope>NUCLEOTIDE SEQUENCE [GENOMIC DNA]</scope>
    <source>
        <strain>CCAP 1403/13f</strain>
    </source>
</reference>
<reference key="3">
    <citation type="journal article" date="1986" name="Biochem. J.">
        <title>Complete amino acid sequence of cyanobacterial gas-vesicle protein indicates a 70-residue molecule that corresponds in size to the crystallographic unit cell.</title>
        <authorList>
            <person name="Hayes P.K."/>
            <person name="Walsby A.E."/>
            <person name="Walker J.E."/>
        </authorList>
    </citation>
    <scope>PROTEIN SEQUENCE OF 2-71</scope>
    <scope>FUNCTION</scope>
    <scope>SUBCELLULAR LOCATION</scope>
    <source>
        <strain>CCAP 1403/13f</strain>
    </source>
</reference>
<reference key="4">
    <citation type="journal article" date="1983" name="Biochem. J.">
        <title>Molecular weight of gas-vesicle protein from the planktonic cyanobacterium Anabaena flos-aquae and implications for structure of the vesicle.</title>
        <authorList>
            <person name="Walker J.E."/>
            <person name="Walsby A.E."/>
        </authorList>
    </citation>
    <scope>PROTEIN SEQUENCE OF 2-65</scope>
    <scope>FUNCTION</scope>
    <scope>SUBCELLULAR LOCATION</scope>
    <source>
        <strain>CCAP 1403/13f</strain>
    </source>
</reference>
<reference key="5">
    <citation type="journal article" date="1984" name="J. Gen. Microbiol.">
        <title>Homology of gas vesicle proteins in cyanobacteria and halobacteria.</title>
        <authorList>
            <person name="Walker J.E."/>
            <person name="Hayes P.K."/>
            <person name="Walsby A.E."/>
        </authorList>
    </citation>
    <scope>PROTEIN SEQUENCE OF 2-47 AND 57-71</scope>
    <scope>FUNCTION</scope>
    <scope>SUBCELLULAR LOCATION</scope>
    <source>
        <strain>CCAP 1403/13f</strain>
    </source>
</reference>
<reference key="6">
    <citation type="journal article" date="1976" name="J. Mol. Biol.">
        <title>Crystalline structure of the gas vesicle wall from Anabaena flos-aquae.</title>
        <authorList>
            <person name="Blaurock A.E."/>
            <person name="Walsby A.E."/>
        </authorList>
    </citation>
    <scope>FUNCTION</scope>
    <scope>SUBUNIT</scope>
    <source>
        <strain>CCAP 1403/13f</strain>
    </source>
</reference>
<reference key="7">
    <citation type="journal article" date="1984" name="Limnol. Oceanogr.">
        <title>Direct evidence for the role of light-mediated gas vesicle collapse in the buoyancy regulation of Anabaena flos-aquae (cyanobacteria).</title>
        <authorList>
            <person name="Oliver R.A."/>
            <person name="Walsby A.E."/>
        </authorList>
    </citation>
    <scope>GAS VESICLE FUNCTION</scope>
    <scope>INDUCTION</scope>
    <source>
        <strain>CCAP 1403/13f</strain>
    </source>
</reference>
<reference key="8">
    <citation type="journal article" date="1988" name="Mol. Microbiol.">
        <title>The protein encoded by gvpC is a minor component of gas vesicles isolated from the cyanobacteria Anabaena flos-aquae and Microcystis sp.</title>
        <authorList>
            <person name="Hayes P.K."/>
            <person name="Lazarus C.M."/>
            <person name="Bees A."/>
            <person name="Walker J.E."/>
            <person name="Walsby A.E."/>
        </authorList>
    </citation>
    <scope>FUNCTION</scope>
    <scope>SUBCELLULAR LOCATION</scope>
    <scope>PROTEIN ABUNDANCE</scope>
    <source>
        <strain>CCAP 1403/13f</strain>
    </source>
</reference>
<reference key="9">
    <citation type="journal article" date="1993" name="J. Gen. Microbiol.">
        <title>The distribution of the outer gas vesicle protein, GvpC, on the Anabaena gas vesicle, and its ratio to GvpA.</title>
        <authorList>
            <person name="Buchholz B.E."/>
            <person name="Hayes P.K."/>
            <person name="Walsby A.E."/>
        </authorList>
    </citation>
    <scope>SUBCELLULAR LOCATION</scope>
    <scope>PROTEIN ABUNDANCE</scope>
    <source>
        <strain>CCAP 1403/13f</strain>
    </source>
</reference>
<reference key="10">
    <citation type="journal article" date="2004" name="Biophys. J.">
        <title>Subunit structure of gas vesicles: a MALDI-TOF mass spectrometry study.</title>
        <authorList>
            <person name="Belenky M."/>
            <person name="Meyers R."/>
            <person name="Herzfeld J."/>
        </authorList>
    </citation>
    <scope>FUNCTION</scope>
    <scope>SUBCELLULAR LOCATION</scope>
    <scope>MASS SPECTROMETRY</scope>
    <scope>TOPOLOGY</scope>
    <source>
        <strain>CCAP 1403/13f</strain>
    </source>
</reference>
<reference key="11">
    <citation type="journal article" date="1996" name="Biophys. J.">
        <title>Direct observation of protein secondary structure in gas vesicles by atomic force microscopy.</title>
        <authorList>
            <person name="McMaster T.J."/>
            <person name="Miles M.J."/>
            <person name="Walsby A.E."/>
        </authorList>
    </citation>
    <scope>SUBUNIT</scope>
    <scope>SUBCELLULAR LOCATION</scope>
    <scope>ATOMIC FORCE MICROSCOPY</scope>
    <source>
        <strain>CCAP 1403/13f</strain>
    </source>
</reference>
<reference key="12">
    <citation type="journal article" date="2006" name="Cytotechnology">
        <title>Use of cyanobacterial gas vesicles as oxygen carriers in cell culture.</title>
        <authorList>
            <person name="Sundararajan A."/>
            <person name="Ju L.K."/>
        </authorList>
    </citation>
    <scope>BIOTECHNOLOGY</scope>
    <source>
        <strain>CCAP 1403/13f</strain>
    </source>
</reference>
<reference key="13">
    <citation type="journal article" date="2006" name="Microbiology">
        <title>Analysis of tryptic digests indicates regions of GvpC that bind to gas vesicles of Anabaena flos-aquae.</title>
        <authorList>
            <person name="Dunton P.G."/>
            <person name="Mawby W.J."/>
            <person name="Shaw V.A."/>
            <person name="Walsby A.E."/>
        </authorList>
    </citation>
    <scope>MASS SPECTROMETRY</scope>
</reference>
<reference key="14">
    <citation type="journal article" date="2010" name="Biophys. J.">
        <title>Solid-state NMR characterization of gas vesicle structure.</title>
        <authorList>
            <person name="Sivertsen A.C."/>
            <person name="Bayro M.J."/>
            <person name="Belenky M."/>
            <person name="Griffin R.G."/>
            <person name="Herzfeld J."/>
        </authorList>
    </citation>
    <scope>FUNCTION</scope>
    <scope>SUBCELLULAR LOCATION</scope>
    <scope>SOLID STATE NMR STUDIES</scope>
    <scope>DOMAIN</scope>
    <scope>STRUCTURAL MODEL</scope>
</reference>
<reference key="15">
    <citation type="journal article" date="2012" name="J. Biol. Chem.">
        <title>An amyloid organelle, solid-state NMR evidence for cross-beta assembly of gas vesicles.</title>
        <authorList>
            <person name="Bayro M.J."/>
            <person name="Daviso E."/>
            <person name="Belenky M."/>
            <person name="Griffin R.G."/>
            <person name="Herzfeld J."/>
        </authorList>
    </citation>
    <scope>FUNCTION</scope>
    <scope>SUBCELLULAR LOCATION</scope>
    <scope>SOLID STATE NMR STUDIES</scope>
    <scope>DOMAIN</scope>
    <scope>STRUCTURAL MODEL</scope>
    <source>
        <strain>CCAP 1403/13f</strain>
    </source>
</reference>
<reference key="16">
    <citation type="journal article" date="2018" name="Nature">
        <title>Acoustic reporter genes for noninvasive imaging of microorganisms in mammalian hosts.</title>
        <authorList>
            <person name="Bourdeau R.W."/>
            <person name="Lee-Gosselin A."/>
            <person name="Lakshmanan A."/>
            <person name="Farhadi A."/>
            <person name="Kumar S.R."/>
            <person name="Nety S.P."/>
            <person name="Shapiro M.G."/>
        </authorList>
    </citation>
    <scope>BIOTECHNOLOGY</scope>
</reference>
<gene>
    <name evidence="1 18" type="primary">gvpA</name>
</gene>
<dbReference type="EMBL" id="M32060">
    <property type="protein sequence ID" value="AAA82497.1"/>
    <property type="molecule type" value="Genomic_DNA"/>
</dbReference>
<dbReference type="EMBL" id="M32060">
    <property type="protein sequence ID" value="AAA82499.1"/>
    <property type="molecule type" value="Genomic_DNA"/>
</dbReference>
<dbReference type="EMBL" id="U17109">
    <property type="protein sequence ID" value="AAA58709.1"/>
    <property type="molecule type" value="Genomic_DNA"/>
</dbReference>
<dbReference type="EMBL" id="U17109">
    <property type="protein sequence ID" value="AAA58708.1"/>
    <property type="molecule type" value="Genomic_DNA"/>
</dbReference>
<dbReference type="PIR" id="A23851">
    <property type="entry name" value="SVFZ"/>
</dbReference>
<dbReference type="PDB" id="8GBS">
    <property type="method" value="EM"/>
    <property type="resolution" value="8.00 A"/>
    <property type="chains" value="A1/A2/A3/A4=1-71"/>
</dbReference>
<dbReference type="PDBsum" id="8GBS"/>
<dbReference type="SMR" id="P10397"/>
<dbReference type="GO" id="GO:0033172">
    <property type="term" value="C:gas vesicle shell"/>
    <property type="evidence" value="ECO:0007669"/>
    <property type="project" value="UniProtKB-UniRule"/>
</dbReference>
<dbReference type="GO" id="GO:0012506">
    <property type="term" value="C:vesicle membrane"/>
    <property type="evidence" value="ECO:0007669"/>
    <property type="project" value="InterPro"/>
</dbReference>
<dbReference type="GO" id="GO:0005198">
    <property type="term" value="F:structural molecule activity"/>
    <property type="evidence" value="ECO:0007669"/>
    <property type="project" value="InterPro"/>
</dbReference>
<dbReference type="HAMAP" id="MF_00576">
    <property type="entry name" value="Gas_vesicle_A"/>
    <property type="match status" value="1"/>
</dbReference>
<dbReference type="InterPro" id="IPR000638">
    <property type="entry name" value="Gas-vesicle_GvpA-like"/>
</dbReference>
<dbReference type="InterPro" id="IPR047870">
    <property type="entry name" value="Gas_vesicle_GvpA"/>
</dbReference>
<dbReference type="InterPro" id="IPR050530">
    <property type="entry name" value="GvpA"/>
</dbReference>
<dbReference type="InterPro" id="IPR018493">
    <property type="entry name" value="GvpA-like_CS"/>
</dbReference>
<dbReference type="NCBIfam" id="NF006874">
    <property type="entry name" value="PRK09371.1"/>
    <property type="match status" value="1"/>
</dbReference>
<dbReference type="PANTHER" id="PTHR35344:SF4">
    <property type="entry name" value="GAS VESICLE PROTEIN A1"/>
    <property type="match status" value="1"/>
</dbReference>
<dbReference type="PANTHER" id="PTHR35344">
    <property type="entry name" value="GAS VESICLE STRUCTURAL PROTEIN 2-RELATED"/>
    <property type="match status" value="1"/>
</dbReference>
<dbReference type="Pfam" id="PF00741">
    <property type="entry name" value="Gas_vesicle"/>
    <property type="match status" value="1"/>
</dbReference>
<dbReference type="PROSITE" id="PS00234">
    <property type="entry name" value="GAS_VESICLE_A_1"/>
    <property type="match status" value="1"/>
</dbReference>
<dbReference type="PROSITE" id="PS00669">
    <property type="entry name" value="GAS_VESICLE_A_2"/>
    <property type="match status" value="1"/>
</dbReference>
<comment type="function">
    <text evidence="2 3 7 8 10 11 12 13 16 17 24">Gas vesicles (GV) are hollow, gas filled proteinaceous nanostructures found in some microorganisms. During planktonic growth they allow positioning of the organism at a favorable depth for light or nutrient acquisition. GVs are highly permeable to gas (Ref.7). GvpA forms the protein shell (PubMed:14695294, PubMed:1527496, PubMed:20858439, PubMed:22147705, PubMed:3098234, PubMed:3141741, PubMed:6409075, Ref.5). The ratio of GvpA:GvpC is estimated to be 33:1 and more recently 25:1 (PubMed:3141741, PubMed:8254305).</text>
</comment>
<comment type="subunit">
    <text evidence="1 15 21">The gas vesicle shell is 2 nm thick and consists of a single layer of this protein. It forms helical ribs nearly perpendicular to the long axis of the vesicle.</text>
</comment>
<comment type="subcellular location">
    <subcellularLocation>
        <location evidence="1 2 3 5 7 8 10 11 12 13 15 16">Gas vesicle shell</location>
    </subcellularLocation>
    <text evidence="2">Both the N- and C-termini of the protein (but not interior sequences between Ser-5 and Glu-58) are accessible to proteases; GVs remain intact after trypsin treatment.</text>
</comment>
<comment type="induction">
    <text evidence="17">Gas vesicles are abundant in low light, and collapse after exposure to high light.</text>
</comment>
<comment type="domain">
    <text evidence="22 23">Solid state NMR studies suggest the protein has an alpha-helix beta-strand beta-strand alpha-helix structure. The beta-strands are thought to make an extended cross-beta structure which forms the hydrophobic core of the GV.</text>
</comment>
<comment type="mass spectrometry" mass="7394.0" method="MALDI" evidence="2 4"/>
<comment type="biotechnology">
    <text evidence="6">Can be used as an oxygen carrier in mammalian cell culture; addition of 1.8% GVs in the medium enhanced the maximum glucose utilization rate by about 30%. The GVs have both GvpA and GvpC.</text>
</comment>
<comment type="biotechnology">
    <text evidence="9">Engineered gas vesicles (GV) can be used for noninvasive imaging in E.coli and mice. Heterologous GVs with 2 copies of gvpA plus gvpC from this bacteria and the gvpR-gvpU operon from P.megaterium make GVs suitable for imaging of bacteria deep in mouse tissues (e.g. the gastrointestinal tract), or when expressed in tumor-homing bacteria, can be detected in tumors.</text>
</comment>
<comment type="similarity">
    <text evidence="1">Belongs to the gas vesicle GvpA family.</text>
</comment>
<protein>
    <recommendedName>
        <fullName evidence="1">Gas vesicle protein A</fullName>
        <shortName evidence="1 18">GvpA</shortName>
    </recommendedName>
    <alternativeName>
        <fullName evidence="18">Gas vesicle structural protein</fullName>
        <shortName evidence="19">GVP</shortName>
    </alternativeName>
</protein>
<feature type="initiator methionine" description="Removed" evidence="2 3 10 12 14 16">
    <location>
        <position position="1"/>
    </location>
</feature>
<feature type="chain" id="PRO_0000199978" description="Gas vesicle protein A">
    <location>
        <begin position="2"/>
        <end position="71"/>
    </location>
</feature>
<feature type="region of interest" description="Alpha helix 1" evidence="23">
    <location>
        <begin position="12"/>
        <end position="22"/>
    </location>
</feature>
<feature type="region of interest" description="Beta-strand 1" evidence="23">
    <location>
        <begin position="23"/>
        <end position="32"/>
    </location>
</feature>
<feature type="region of interest" description="Beta turn" evidence="23">
    <location>
        <begin position="33"/>
        <end position="36"/>
    </location>
</feature>
<feature type="region of interest" description="Beta-strand 2" evidence="23">
    <location>
        <begin position="37"/>
        <end position="46"/>
    </location>
</feature>
<feature type="region of interest" description="Alpha helix 2" evidence="23">
    <location>
        <begin position="47"/>
        <end position="70"/>
    </location>
</feature>
<feature type="sequence conflict" description="In Ref. 3; AA sequence, 4; AA sequence and 5; AA sequence." evidence="20" ref="3 4 5">
    <original>E</original>
    <variation>Q</variation>
    <location>
        <position position="38"/>
    </location>
</feature>
<feature type="sequence conflict" description="In Ref. 3; AA sequence and 5; AA sequence." evidence="20" ref="3 5">
    <original>AVP</original>
    <variation>VPA</variation>
    <location>
        <begin position="68"/>
        <end position="70"/>
    </location>
</feature>
<keyword id="KW-0002">3D-structure</keyword>
<keyword id="KW-0903">Direct protein sequencing</keyword>
<keyword id="KW-0304">Gas vesicle</keyword>